<gene>
    <name evidence="1" type="primary">pyrG</name>
    <name type="ordered locus">Anae109_4318</name>
</gene>
<name>PYRG_ANADF</name>
<sequence>MVKRGKKTKYLFVTGGVVSSLGKGLAAASIGALLENRGLEVTHLKLDPYINVDPGTMSPFQHGEVYVTDDGAETDLDLGHYERFTSAKMTRKNNYTTGRIYSNVIQRERRGEYLGKTVQVIPHITDEIKAVIREAAGGVDILIVEVGGTVGDIESLPFLEAIRQMKYDVGEENAVYAHLTLVPFIAAAGELKTKPTQHSVKELREIGIQPDLLLCRSDREIAREMKDKIALFCNVDPSAVFTALDVKSIYEVPLSLHKEGLDDKLAELFNIWSRAPRLDKWEQIVQKVKAPKHGEVRVGVVGKYVELHESYKSLNEALVHGGIGADVRVKQVFIDSTKLEEGDLSELNQVDAILVPGGFGVRGTEGKILAVRHAREHKIPFFGICLGLQMAVIEFGRSVLGLERANSLEFDEQTPHPVVTLMEAQKAVADKGGTMRLGTYPCALKDGTKARELYGVDLVQERHRHRYEFNNAYRAQYEGAGMVFSGTNPELNLVEMIELNNHPHFVGCQFHPEFKSKPFAPHPLFAGFVHAAREQRDQQADRRAAVTKLPVGKNV</sequence>
<protein>
    <recommendedName>
        <fullName evidence="1">CTP synthase</fullName>
        <ecNumber evidence="1">6.3.4.2</ecNumber>
    </recommendedName>
    <alternativeName>
        <fullName evidence="1">Cytidine 5'-triphosphate synthase</fullName>
    </alternativeName>
    <alternativeName>
        <fullName evidence="1">Cytidine triphosphate synthetase</fullName>
        <shortName evidence="1">CTP synthetase</shortName>
        <shortName evidence="1">CTPS</shortName>
    </alternativeName>
    <alternativeName>
        <fullName evidence="1">UTP--ammonia ligase</fullName>
    </alternativeName>
</protein>
<reference key="1">
    <citation type="journal article" date="2015" name="Genome Announc.">
        <title>Complete genome sequence of Anaeromyxobacter sp. Fw109-5, an anaerobic, metal-reducing bacterium isolated from a contaminated subsurface environment.</title>
        <authorList>
            <person name="Hwang C."/>
            <person name="Copeland A."/>
            <person name="Lucas S."/>
            <person name="Lapidus A."/>
            <person name="Barry K."/>
            <person name="Glavina Del Rio T."/>
            <person name="Dalin E."/>
            <person name="Tice H."/>
            <person name="Pitluck S."/>
            <person name="Sims D."/>
            <person name="Brettin T."/>
            <person name="Bruce D.C."/>
            <person name="Detter J.C."/>
            <person name="Han C.S."/>
            <person name="Schmutz J."/>
            <person name="Larimer F.W."/>
            <person name="Land M.L."/>
            <person name="Hauser L.J."/>
            <person name="Kyrpides N."/>
            <person name="Lykidis A."/>
            <person name="Richardson P."/>
            <person name="Belieav A."/>
            <person name="Sanford R.A."/>
            <person name="Loeffler F.E."/>
            <person name="Fields M.W."/>
        </authorList>
    </citation>
    <scope>NUCLEOTIDE SEQUENCE [LARGE SCALE GENOMIC DNA]</scope>
    <source>
        <strain>Fw109-5</strain>
    </source>
</reference>
<dbReference type="EC" id="6.3.4.2" evidence="1"/>
<dbReference type="EMBL" id="CP000769">
    <property type="protein sequence ID" value="ABS28496.1"/>
    <property type="molecule type" value="Genomic_DNA"/>
</dbReference>
<dbReference type="RefSeq" id="WP_012099141.1">
    <property type="nucleotide sequence ID" value="NC_009675.1"/>
</dbReference>
<dbReference type="SMR" id="A7HIF0"/>
<dbReference type="STRING" id="404589.Anae109_4318"/>
<dbReference type="MEROPS" id="C26.964"/>
<dbReference type="KEGG" id="afw:Anae109_4318"/>
<dbReference type="eggNOG" id="COG0504">
    <property type="taxonomic scope" value="Bacteria"/>
</dbReference>
<dbReference type="HOGENOM" id="CLU_011675_5_0_7"/>
<dbReference type="OrthoDB" id="9801107at2"/>
<dbReference type="UniPathway" id="UPA00159">
    <property type="reaction ID" value="UER00277"/>
</dbReference>
<dbReference type="Proteomes" id="UP000006382">
    <property type="component" value="Chromosome"/>
</dbReference>
<dbReference type="GO" id="GO:0005829">
    <property type="term" value="C:cytosol"/>
    <property type="evidence" value="ECO:0007669"/>
    <property type="project" value="TreeGrafter"/>
</dbReference>
<dbReference type="GO" id="GO:0005524">
    <property type="term" value="F:ATP binding"/>
    <property type="evidence" value="ECO:0007669"/>
    <property type="project" value="UniProtKB-KW"/>
</dbReference>
<dbReference type="GO" id="GO:0003883">
    <property type="term" value="F:CTP synthase activity"/>
    <property type="evidence" value="ECO:0007669"/>
    <property type="project" value="UniProtKB-UniRule"/>
</dbReference>
<dbReference type="GO" id="GO:0004359">
    <property type="term" value="F:glutaminase activity"/>
    <property type="evidence" value="ECO:0007669"/>
    <property type="project" value="RHEA"/>
</dbReference>
<dbReference type="GO" id="GO:0042802">
    <property type="term" value="F:identical protein binding"/>
    <property type="evidence" value="ECO:0007669"/>
    <property type="project" value="TreeGrafter"/>
</dbReference>
<dbReference type="GO" id="GO:0046872">
    <property type="term" value="F:metal ion binding"/>
    <property type="evidence" value="ECO:0007669"/>
    <property type="project" value="UniProtKB-KW"/>
</dbReference>
<dbReference type="GO" id="GO:0044210">
    <property type="term" value="P:'de novo' CTP biosynthetic process"/>
    <property type="evidence" value="ECO:0007669"/>
    <property type="project" value="UniProtKB-UniRule"/>
</dbReference>
<dbReference type="GO" id="GO:0019856">
    <property type="term" value="P:pyrimidine nucleobase biosynthetic process"/>
    <property type="evidence" value="ECO:0007669"/>
    <property type="project" value="TreeGrafter"/>
</dbReference>
<dbReference type="CDD" id="cd03113">
    <property type="entry name" value="CTPS_N"/>
    <property type="match status" value="1"/>
</dbReference>
<dbReference type="CDD" id="cd01746">
    <property type="entry name" value="GATase1_CTP_Synthase"/>
    <property type="match status" value="1"/>
</dbReference>
<dbReference type="FunFam" id="3.40.50.300:FF:000009">
    <property type="entry name" value="CTP synthase"/>
    <property type="match status" value="1"/>
</dbReference>
<dbReference type="FunFam" id="3.40.50.880:FF:000002">
    <property type="entry name" value="CTP synthase"/>
    <property type="match status" value="1"/>
</dbReference>
<dbReference type="Gene3D" id="3.40.50.880">
    <property type="match status" value="1"/>
</dbReference>
<dbReference type="Gene3D" id="3.40.50.300">
    <property type="entry name" value="P-loop containing nucleotide triphosphate hydrolases"/>
    <property type="match status" value="1"/>
</dbReference>
<dbReference type="HAMAP" id="MF_01227">
    <property type="entry name" value="PyrG"/>
    <property type="match status" value="1"/>
</dbReference>
<dbReference type="InterPro" id="IPR029062">
    <property type="entry name" value="Class_I_gatase-like"/>
</dbReference>
<dbReference type="InterPro" id="IPR004468">
    <property type="entry name" value="CTP_synthase"/>
</dbReference>
<dbReference type="InterPro" id="IPR017456">
    <property type="entry name" value="CTP_synthase_N"/>
</dbReference>
<dbReference type="InterPro" id="IPR017926">
    <property type="entry name" value="GATASE"/>
</dbReference>
<dbReference type="InterPro" id="IPR033828">
    <property type="entry name" value="GATase1_CTP_Synthase"/>
</dbReference>
<dbReference type="InterPro" id="IPR027417">
    <property type="entry name" value="P-loop_NTPase"/>
</dbReference>
<dbReference type="NCBIfam" id="NF003792">
    <property type="entry name" value="PRK05380.1"/>
    <property type="match status" value="1"/>
</dbReference>
<dbReference type="NCBIfam" id="TIGR00337">
    <property type="entry name" value="PyrG"/>
    <property type="match status" value="1"/>
</dbReference>
<dbReference type="PANTHER" id="PTHR11550">
    <property type="entry name" value="CTP SYNTHASE"/>
    <property type="match status" value="1"/>
</dbReference>
<dbReference type="PANTHER" id="PTHR11550:SF0">
    <property type="entry name" value="CTP SYNTHASE-RELATED"/>
    <property type="match status" value="1"/>
</dbReference>
<dbReference type="Pfam" id="PF06418">
    <property type="entry name" value="CTP_synth_N"/>
    <property type="match status" value="1"/>
</dbReference>
<dbReference type="Pfam" id="PF00117">
    <property type="entry name" value="GATase"/>
    <property type="match status" value="1"/>
</dbReference>
<dbReference type="SUPFAM" id="SSF52317">
    <property type="entry name" value="Class I glutamine amidotransferase-like"/>
    <property type="match status" value="1"/>
</dbReference>
<dbReference type="SUPFAM" id="SSF52540">
    <property type="entry name" value="P-loop containing nucleoside triphosphate hydrolases"/>
    <property type="match status" value="1"/>
</dbReference>
<dbReference type="PROSITE" id="PS51273">
    <property type="entry name" value="GATASE_TYPE_1"/>
    <property type="match status" value="1"/>
</dbReference>
<accession>A7HIF0</accession>
<comment type="function">
    <text evidence="1">Catalyzes the ATP-dependent amination of UTP to CTP with either L-glutamine or ammonia as the source of nitrogen. Regulates intracellular CTP levels through interactions with the four ribonucleotide triphosphates.</text>
</comment>
<comment type="catalytic activity">
    <reaction evidence="1">
        <text>UTP + L-glutamine + ATP + H2O = CTP + L-glutamate + ADP + phosphate + 2 H(+)</text>
        <dbReference type="Rhea" id="RHEA:26426"/>
        <dbReference type="ChEBI" id="CHEBI:15377"/>
        <dbReference type="ChEBI" id="CHEBI:15378"/>
        <dbReference type="ChEBI" id="CHEBI:29985"/>
        <dbReference type="ChEBI" id="CHEBI:30616"/>
        <dbReference type="ChEBI" id="CHEBI:37563"/>
        <dbReference type="ChEBI" id="CHEBI:43474"/>
        <dbReference type="ChEBI" id="CHEBI:46398"/>
        <dbReference type="ChEBI" id="CHEBI:58359"/>
        <dbReference type="ChEBI" id="CHEBI:456216"/>
        <dbReference type="EC" id="6.3.4.2"/>
    </reaction>
</comment>
<comment type="catalytic activity">
    <reaction evidence="1">
        <text>L-glutamine + H2O = L-glutamate + NH4(+)</text>
        <dbReference type="Rhea" id="RHEA:15889"/>
        <dbReference type="ChEBI" id="CHEBI:15377"/>
        <dbReference type="ChEBI" id="CHEBI:28938"/>
        <dbReference type="ChEBI" id="CHEBI:29985"/>
        <dbReference type="ChEBI" id="CHEBI:58359"/>
    </reaction>
</comment>
<comment type="catalytic activity">
    <reaction evidence="1">
        <text>UTP + NH4(+) + ATP = CTP + ADP + phosphate + 2 H(+)</text>
        <dbReference type="Rhea" id="RHEA:16597"/>
        <dbReference type="ChEBI" id="CHEBI:15378"/>
        <dbReference type="ChEBI" id="CHEBI:28938"/>
        <dbReference type="ChEBI" id="CHEBI:30616"/>
        <dbReference type="ChEBI" id="CHEBI:37563"/>
        <dbReference type="ChEBI" id="CHEBI:43474"/>
        <dbReference type="ChEBI" id="CHEBI:46398"/>
        <dbReference type="ChEBI" id="CHEBI:456216"/>
    </reaction>
</comment>
<comment type="activity regulation">
    <text evidence="1">Allosterically activated by GTP, when glutamine is the substrate; GTP has no effect on the reaction when ammonia is the substrate. The allosteric effector GTP functions by stabilizing the protein conformation that binds the tetrahedral intermediate(s) formed during glutamine hydrolysis. Inhibited by the product CTP, via allosteric rather than competitive inhibition.</text>
</comment>
<comment type="pathway">
    <text evidence="1">Pyrimidine metabolism; CTP biosynthesis via de novo pathway; CTP from UDP: step 2/2.</text>
</comment>
<comment type="subunit">
    <text evidence="1">Homotetramer.</text>
</comment>
<comment type="miscellaneous">
    <text evidence="1">CTPSs have evolved a hybrid strategy for distinguishing between UTP and CTP. The overlapping regions of the product feedback inhibitory and substrate sites recognize a common feature in both compounds, the triphosphate moiety. To differentiate isosteric substrate and product pyrimidine rings, an additional pocket far from the expected kinase/ligase catalytic site, specifically recognizes the cytosine and ribose portions of the product inhibitor.</text>
</comment>
<comment type="similarity">
    <text evidence="1">Belongs to the CTP synthase family.</text>
</comment>
<evidence type="ECO:0000255" key="1">
    <source>
        <dbReference type="HAMAP-Rule" id="MF_01227"/>
    </source>
</evidence>
<organism>
    <name type="scientific">Anaeromyxobacter sp. (strain Fw109-5)</name>
    <dbReference type="NCBI Taxonomy" id="404589"/>
    <lineage>
        <taxon>Bacteria</taxon>
        <taxon>Pseudomonadati</taxon>
        <taxon>Myxococcota</taxon>
        <taxon>Myxococcia</taxon>
        <taxon>Myxococcales</taxon>
        <taxon>Cystobacterineae</taxon>
        <taxon>Anaeromyxobacteraceae</taxon>
        <taxon>Anaeromyxobacter</taxon>
    </lineage>
</organism>
<feature type="chain" id="PRO_1000139374" description="CTP synthase">
    <location>
        <begin position="1"/>
        <end position="555"/>
    </location>
</feature>
<feature type="domain" description="Glutamine amidotransferase type-1" evidence="1">
    <location>
        <begin position="297"/>
        <end position="538"/>
    </location>
</feature>
<feature type="region of interest" description="Amidoligase domain" evidence="1">
    <location>
        <begin position="1"/>
        <end position="271"/>
    </location>
</feature>
<feature type="active site" description="Nucleophile; for glutamine hydrolysis" evidence="1">
    <location>
        <position position="385"/>
    </location>
</feature>
<feature type="active site" evidence="1">
    <location>
        <position position="511"/>
    </location>
</feature>
<feature type="active site" evidence="1">
    <location>
        <position position="513"/>
    </location>
</feature>
<feature type="binding site" evidence="1">
    <location>
        <position position="19"/>
    </location>
    <ligand>
        <name>CTP</name>
        <dbReference type="ChEBI" id="CHEBI:37563"/>
        <note>allosteric inhibitor</note>
    </ligand>
</feature>
<feature type="binding site" evidence="1">
    <location>
        <position position="19"/>
    </location>
    <ligand>
        <name>UTP</name>
        <dbReference type="ChEBI" id="CHEBI:46398"/>
    </ligand>
</feature>
<feature type="binding site" evidence="1">
    <location>
        <begin position="20"/>
        <end position="25"/>
    </location>
    <ligand>
        <name>ATP</name>
        <dbReference type="ChEBI" id="CHEBI:30616"/>
    </ligand>
</feature>
<feature type="binding site" evidence="1">
    <location>
        <position position="77"/>
    </location>
    <ligand>
        <name>ATP</name>
        <dbReference type="ChEBI" id="CHEBI:30616"/>
    </ligand>
</feature>
<feature type="binding site" evidence="1">
    <location>
        <position position="77"/>
    </location>
    <ligand>
        <name>Mg(2+)</name>
        <dbReference type="ChEBI" id="CHEBI:18420"/>
    </ligand>
</feature>
<feature type="binding site" evidence="1">
    <location>
        <position position="145"/>
    </location>
    <ligand>
        <name>Mg(2+)</name>
        <dbReference type="ChEBI" id="CHEBI:18420"/>
    </ligand>
</feature>
<feature type="binding site" evidence="1">
    <location>
        <begin position="152"/>
        <end position="154"/>
    </location>
    <ligand>
        <name>CTP</name>
        <dbReference type="ChEBI" id="CHEBI:37563"/>
        <note>allosteric inhibitor</note>
    </ligand>
</feature>
<feature type="binding site" evidence="1">
    <location>
        <begin position="192"/>
        <end position="197"/>
    </location>
    <ligand>
        <name>CTP</name>
        <dbReference type="ChEBI" id="CHEBI:37563"/>
        <note>allosteric inhibitor</note>
    </ligand>
</feature>
<feature type="binding site" evidence="1">
    <location>
        <begin position="192"/>
        <end position="197"/>
    </location>
    <ligand>
        <name>UTP</name>
        <dbReference type="ChEBI" id="CHEBI:46398"/>
    </ligand>
</feature>
<feature type="binding site" evidence="1">
    <location>
        <position position="228"/>
    </location>
    <ligand>
        <name>CTP</name>
        <dbReference type="ChEBI" id="CHEBI:37563"/>
        <note>allosteric inhibitor</note>
    </ligand>
</feature>
<feature type="binding site" evidence="1">
    <location>
        <position position="228"/>
    </location>
    <ligand>
        <name>UTP</name>
        <dbReference type="ChEBI" id="CHEBI:46398"/>
    </ligand>
</feature>
<feature type="binding site" evidence="1">
    <location>
        <position position="358"/>
    </location>
    <ligand>
        <name>L-glutamine</name>
        <dbReference type="ChEBI" id="CHEBI:58359"/>
    </ligand>
</feature>
<feature type="binding site" evidence="1">
    <location>
        <begin position="386"/>
        <end position="389"/>
    </location>
    <ligand>
        <name>L-glutamine</name>
        <dbReference type="ChEBI" id="CHEBI:58359"/>
    </ligand>
</feature>
<feature type="binding site" evidence="1">
    <location>
        <position position="409"/>
    </location>
    <ligand>
        <name>L-glutamine</name>
        <dbReference type="ChEBI" id="CHEBI:58359"/>
    </ligand>
</feature>
<feature type="binding site" evidence="1">
    <location>
        <position position="466"/>
    </location>
    <ligand>
        <name>L-glutamine</name>
        <dbReference type="ChEBI" id="CHEBI:58359"/>
    </ligand>
</feature>
<keyword id="KW-0067">ATP-binding</keyword>
<keyword id="KW-0315">Glutamine amidotransferase</keyword>
<keyword id="KW-0436">Ligase</keyword>
<keyword id="KW-0460">Magnesium</keyword>
<keyword id="KW-0479">Metal-binding</keyword>
<keyword id="KW-0547">Nucleotide-binding</keyword>
<keyword id="KW-0665">Pyrimidine biosynthesis</keyword>
<keyword id="KW-1185">Reference proteome</keyword>
<proteinExistence type="inferred from homology"/>